<organism>
    <name type="scientific">Clostridium acetobutylicum (strain ATCC 824 / DSM 792 / JCM 1419 / IAM 19013 / LMG 5710 / NBRC 13948 / NRRL B-527 / VKM B-1787 / 2291 / W)</name>
    <dbReference type="NCBI Taxonomy" id="272562"/>
    <lineage>
        <taxon>Bacteria</taxon>
        <taxon>Bacillati</taxon>
        <taxon>Bacillota</taxon>
        <taxon>Clostridia</taxon>
        <taxon>Eubacteriales</taxon>
        <taxon>Clostridiaceae</taxon>
        <taxon>Clostridium</taxon>
    </lineage>
</organism>
<comment type="function">
    <text evidence="2">Purine nucleoside enzyme that catalyzes the phosphorolysis of adenosine and inosine nucleosides, yielding D-ribose 1-phosphate and the respective free bases, adenine and hypoxanthine. Also catalyzes the phosphorolysis of S-methyl-5'-thioadenosine into adenine and S-methyl-5-thio-alpha-D-ribose 1-phosphate. Also has adenosine deaminase activity.</text>
</comment>
<comment type="catalytic activity">
    <reaction evidence="2">
        <text>adenosine + phosphate = alpha-D-ribose 1-phosphate + adenine</text>
        <dbReference type="Rhea" id="RHEA:27642"/>
        <dbReference type="ChEBI" id="CHEBI:16335"/>
        <dbReference type="ChEBI" id="CHEBI:16708"/>
        <dbReference type="ChEBI" id="CHEBI:43474"/>
        <dbReference type="ChEBI" id="CHEBI:57720"/>
        <dbReference type="EC" id="2.4.2.1"/>
    </reaction>
    <physiologicalReaction direction="left-to-right" evidence="2">
        <dbReference type="Rhea" id="RHEA:27643"/>
    </physiologicalReaction>
</comment>
<comment type="catalytic activity">
    <reaction evidence="2">
        <text>S-methyl-5'-thioadenosine + phosphate = 5-(methylsulfanyl)-alpha-D-ribose 1-phosphate + adenine</text>
        <dbReference type="Rhea" id="RHEA:11852"/>
        <dbReference type="ChEBI" id="CHEBI:16708"/>
        <dbReference type="ChEBI" id="CHEBI:17509"/>
        <dbReference type="ChEBI" id="CHEBI:43474"/>
        <dbReference type="ChEBI" id="CHEBI:58533"/>
        <dbReference type="EC" id="2.4.2.28"/>
    </reaction>
    <physiologicalReaction direction="left-to-right" evidence="2">
        <dbReference type="Rhea" id="RHEA:11853"/>
    </physiologicalReaction>
</comment>
<comment type="catalytic activity">
    <reaction evidence="2">
        <text>inosine + phosphate = alpha-D-ribose 1-phosphate + hypoxanthine</text>
        <dbReference type="Rhea" id="RHEA:27646"/>
        <dbReference type="ChEBI" id="CHEBI:17368"/>
        <dbReference type="ChEBI" id="CHEBI:17596"/>
        <dbReference type="ChEBI" id="CHEBI:43474"/>
        <dbReference type="ChEBI" id="CHEBI:57720"/>
        <dbReference type="EC" id="2.4.2.1"/>
    </reaction>
    <physiologicalReaction direction="left-to-right" evidence="2">
        <dbReference type="Rhea" id="RHEA:27647"/>
    </physiologicalReaction>
</comment>
<comment type="catalytic activity">
    <reaction evidence="2">
        <text>adenosine + H2O + H(+) = inosine + NH4(+)</text>
        <dbReference type="Rhea" id="RHEA:24408"/>
        <dbReference type="ChEBI" id="CHEBI:15377"/>
        <dbReference type="ChEBI" id="CHEBI:15378"/>
        <dbReference type="ChEBI" id="CHEBI:16335"/>
        <dbReference type="ChEBI" id="CHEBI:17596"/>
        <dbReference type="ChEBI" id="CHEBI:28938"/>
        <dbReference type="EC" id="3.5.4.4"/>
    </reaction>
    <physiologicalReaction direction="left-to-right" evidence="2">
        <dbReference type="Rhea" id="RHEA:24409"/>
    </physiologicalReaction>
</comment>
<comment type="cofactor">
    <cofactor evidence="1">
        <name>Cu(2+)</name>
        <dbReference type="ChEBI" id="CHEBI:29036"/>
    </cofactor>
    <cofactor evidence="2">
        <name>Zn(2+)</name>
        <dbReference type="ChEBI" id="CHEBI:29105"/>
    </cofactor>
</comment>
<comment type="subunit">
    <text evidence="3">Homodimer.</text>
</comment>
<comment type="similarity">
    <text evidence="4">Belongs to the purine nucleoside phosphorylase YfiH/LACC1 family.</text>
</comment>
<comment type="sequence caution" evidence="4">
    <conflict type="erroneous initiation">
        <sequence resource="EMBL-CDS" id="AAK79665"/>
    </conflict>
</comment>
<comment type="sequence caution" evidence="4">
    <conflict type="frameshift">
        <sequence resource="EMBL-CDS" id="CAA80623"/>
    </conflict>
</comment>
<sequence>MNIKKVDKYSFLEFKDDKFSLYFSTAENGLNFNINTEEGNDNIRNLKDWFNVKDVGYLKQTHSDIILNYDSDKELLEGDALITDKDNTLVGVFTADCVPVLLYDKSKNVMAAVHSGWKGTSDMIVKKTIIKMKQEFLSTASDITVYIGPHNKACCYEFGEEALSEFEGSGIYDISEIYKDGKLDLEKCIVKQCKSENVNNIKCLNICTNCSKEYKMFSYRRDGKSAGRMFSFIIKK</sequence>
<dbReference type="EC" id="2.4.2.1" evidence="2"/>
<dbReference type="EC" id="3.5.4.4" evidence="2"/>
<dbReference type="EC" id="2.4.2.28" evidence="2"/>
<dbReference type="EMBL" id="Z23079">
    <property type="protein sequence ID" value="CAA80623.1"/>
    <property type="status" value="ALT_FRAME"/>
    <property type="molecule type" value="Genomic_DNA"/>
</dbReference>
<dbReference type="EMBL" id="AE001437">
    <property type="protein sequence ID" value="AAK79665.1"/>
    <property type="status" value="ALT_INIT"/>
    <property type="molecule type" value="Genomic_DNA"/>
</dbReference>
<dbReference type="PIR" id="F97109">
    <property type="entry name" value="F97109"/>
</dbReference>
<dbReference type="RefSeq" id="NP_348325.1">
    <property type="nucleotide sequence ID" value="NC_003030.1"/>
</dbReference>
<dbReference type="SMR" id="P33664"/>
<dbReference type="STRING" id="272562.CA_C1699"/>
<dbReference type="KEGG" id="cac:CA_C1699"/>
<dbReference type="PATRIC" id="fig|272562.8.peg.1902"/>
<dbReference type="eggNOG" id="COG1496">
    <property type="taxonomic scope" value="Bacteria"/>
</dbReference>
<dbReference type="HOGENOM" id="CLU_065784_0_2_9"/>
<dbReference type="OrthoDB" id="4279at2"/>
<dbReference type="Proteomes" id="UP000000814">
    <property type="component" value="Chromosome"/>
</dbReference>
<dbReference type="GO" id="GO:0004000">
    <property type="term" value="F:adenosine deaminase activity"/>
    <property type="evidence" value="ECO:0007669"/>
    <property type="project" value="RHEA"/>
</dbReference>
<dbReference type="GO" id="GO:0005507">
    <property type="term" value="F:copper ion binding"/>
    <property type="evidence" value="ECO:0007669"/>
    <property type="project" value="TreeGrafter"/>
</dbReference>
<dbReference type="GO" id="GO:0016491">
    <property type="term" value="F:oxidoreductase activity"/>
    <property type="evidence" value="ECO:0007669"/>
    <property type="project" value="UniProtKB-KW"/>
</dbReference>
<dbReference type="GO" id="GO:0017061">
    <property type="term" value="F:S-methyl-5-thioadenosine phosphorylase activity"/>
    <property type="evidence" value="ECO:0007669"/>
    <property type="project" value="UniProtKB-EC"/>
</dbReference>
<dbReference type="CDD" id="cd16833">
    <property type="entry name" value="YfiH"/>
    <property type="match status" value="1"/>
</dbReference>
<dbReference type="Gene3D" id="3.60.140.10">
    <property type="entry name" value="CNF1/YfiH-like putative cysteine hydrolases"/>
    <property type="match status" value="1"/>
</dbReference>
<dbReference type="InterPro" id="IPR003730">
    <property type="entry name" value="Cu_polyphenol_OxRdtase"/>
</dbReference>
<dbReference type="InterPro" id="IPR038371">
    <property type="entry name" value="Cu_polyphenol_OxRdtase_sf"/>
</dbReference>
<dbReference type="InterPro" id="IPR011324">
    <property type="entry name" value="Cytotoxic_necrot_fac-like_cat"/>
</dbReference>
<dbReference type="NCBIfam" id="TIGR00726">
    <property type="entry name" value="peptidoglycan editing factor PgeF"/>
    <property type="match status" value="1"/>
</dbReference>
<dbReference type="PANTHER" id="PTHR30616:SF2">
    <property type="entry name" value="PURINE NUCLEOSIDE PHOSPHORYLASE LACC1"/>
    <property type="match status" value="1"/>
</dbReference>
<dbReference type="PANTHER" id="PTHR30616">
    <property type="entry name" value="UNCHARACTERIZED PROTEIN YFIH"/>
    <property type="match status" value="1"/>
</dbReference>
<dbReference type="Pfam" id="PF02578">
    <property type="entry name" value="Cu-oxidase_4"/>
    <property type="match status" value="1"/>
</dbReference>
<dbReference type="SUPFAM" id="SSF64438">
    <property type="entry name" value="CNF1/YfiH-like putative cysteine hydrolases"/>
    <property type="match status" value="1"/>
</dbReference>
<proteinExistence type="inferred from homology"/>
<accession>P33664</accession>
<reference key="1">
    <citation type="journal article" date="1994" name="J. Bacteriol.">
        <title>Sporulation and primary sigma factor homologous genes in Clostridium acetobutylicum.</title>
        <authorList>
            <person name="Sauer U."/>
            <person name="Treuner A."/>
            <person name="Buchholz M."/>
            <person name="Santangelo J.D."/>
            <person name="Durre P."/>
        </authorList>
    </citation>
    <scope>NUCLEOTIDE SEQUENCE [GENOMIC DNA]</scope>
    <source>
        <strain>ATCC 824 / DSM 792 / JCM 1419 / IAM 19013 / LMG 5710 / NBRC 13948 / NRRL B-527 / VKM B-1787 / 2291 / W</strain>
    </source>
</reference>
<reference key="2">
    <citation type="submission" date="1997-09" db="EMBL/GenBank/DDBJ databases">
        <authorList>
            <person name="Santangelo J.D."/>
        </authorList>
    </citation>
    <scope>SEQUENCE REVISION</scope>
</reference>
<reference key="3">
    <citation type="journal article" date="2001" name="J. Bacteriol.">
        <title>Genome sequence and comparative analysis of the solvent-producing bacterium Clostridium acetobutylicum.</title>
        <authorList>
            <person name="Noelling J."/>
            <person name="Breton G."/>
            <person name="Omelchenko M.V."/>
            <person name="Makarova K.S."/>
            <person name="Zeng Q."/>
            <person name="Gibson R."/>
            <person name="Lee H.M."/>
            <person name="Dubois J."/>
            <person name="Qiu D."/>
            <person name="Hitti J."/>
            <person name="Wolf Y.I."/>
            <person name="Tatusov R.L."/>
            <person name="Sabathe F."/>
            <person name="Doucette-Stamm L.A."/>
            <person name="Soucaille P."/>
            <person name="Daly M.J."/>
            <person name="Bennett G.N."/>
            <person name="Koonin E.V."/>
            <person name="Smith D.R."/>
        </authorList>
    </citation>
    <scope>NUCLEOTIDE SEQUENCE [LARGE SCALE GENOMIC DNA]</scope>
    <source>
        <strain>ATCC 824 / DSM 792 / JCM 1419 / IAM 19013 / LMG 5710 / NBRC 13948 / NRRL B-527 / VKM B-1787 / 2291 / W</strain>
    </source>
</reference>
<evidence type="ECO:0000250" key="1">
    <source>
        <dbReference type="UniProtKB" id="P33644"/>
    </source>
</evidence>
<evidence type="ECO:0000250" key="2">
    <source>
        <dbReference type="UniProtKB" id="P84138"/>
    </source>
</evidence>
<evidence type="ECO:0000250" key="3">
    <source>
        <dbReference type="UniProtKB" id="Q1EIR0"/>
    </source>
</evidence>
<evidence type="ECO:0000305" key="4"/>
<feature type="chain" id="PRO_0000163160" description="Purine nucleoside phosphorylase CA_C1699">
    <location>
        <begin position="1"/>
        <end position="236"/>
    </location>
</feature>
<feature type="binding site" evidence="2">
    <location>
        <position position="62"/>
    </location>
    <ligand>
        <name>Zn(2+)</name>
        <dbReference type="ChEBI" id="CHEBI:29105"/>
        <note>catalytic</note>
    </ligand>
</feature>
<feature type="binding site" evidence="2">
    <location>
        <position position="97"/>
    </location>
    <ligand>
        <name>Zn(2+)</name>
        <dbReference type="ChEBI" id="CHEBI:29105"/>
        <note>catalytic</note>
    </ligand>
</feature>
<feature type="binding site" evidence="2">
    <location>
        <position position="114"/>
    </location>
    <ligand>
        <name>Zn(2+)</name>
        <dbReference type="ChEBI" id="CHEBI:29105"/>
        <note>catalytic</note>
    </ligand>
</feature>
<name>PURNU_CLOAB</name>
<gene>
    <name type="ordered locus">CA_C1699</name>
</gene>
<protein>
    <recommendedName>
        <fullName>Purine nucleoside phosphorylase CA_C1699</fullName>
        <ecNumber evidence="2">2.4.2.1</ecNumber>
    </recommendedName>
    <alternativeName>
        <fullName>Adenosine deaminase CA_C1699</fullName>
        <ecNumber evidence="2">3.5.4.4</ecNumber>
    </alternativeName>
    <alternativeName>
        <fullName>S-methyl-5'-thioadenosine phosphorylase CA_C1699</fullName>
        <ecNumber evidence="2">2.4.2.28</ecNumber>
    </alternativeName>
</protein>
<keyword id="KW-0186">Copper</keyword>
<keyword id="KW-0378">Hydrolase</keyword>
<keyword id="KW-0479">Metal-binding</keyword>
<keyword id="KW-0560">Oxidoreductase</keyword>
<keyword id="KW-1185">Reference proteome</keyword>
<keyword id="KW-0808">Transferase</keyword>
<keyword id="KW-0862">Zinc</keyword>